<keyword id="KW-0131">Cell cycle</keyword>
<keyword id="KW-0132">Cell division</keyword>
<keyword id="KW-0227">DNA damage</keyword>
<keyword id="KW-0717">Septation</keyword>
<keyword id="KW-0742">SOS response</keyword>
<evidence type="ECO:0000255" key="1">
    <source>
        <dbReference type="HAMAP-Rule" id="MF_01179"/>
    </source>
</evidence>
<evidence type="ECO:0000305" key="2"/>
<proteinExistence type="inferred from homology"/>
<dbReference type="EMBL" id="CP000243">
    <property type="protein sequence ID" value="ABE06509.1"/>
    <property type="status" value="ALT_INIT"/>
    <property type="molecule type" value="Genomic_DNA"/>
</dbReference>
<dbReference type="RefSeq" id="WP_000287750.1">
    <property type="nucleotide sequence ID" value="NZ_CP064825.1"/>
</dbReference>
<dbReference type="SMR" id="Q1RDQ5"/>
<dbReference type="KEGG" id="eci:UTI89_C1024"/>
<dbReference type="HOGENOM" id="CLU_118972_1_0_6"/>
<dbReference type="Proteomes" id="UP000001952">
    <property type="component" value="Chromosome"/>
</dbReference>
<dbReference type="GO" id="GO:0000917">
    <property type="term" value="P:division septum assembly"/>
    <property type="evidence" value="ECO:0007669"/>
    <property type="project" value="UniProtKB-KW"/>
</dbReference>
<dbReference type="GO" id="GO:0006281">
    <property type="term" value="P:DNA repair"/>
    <property type="evidence" value="ECO:0007669"/>
    <property type="project" value="TreeGrafter"/>
</dbReference>
<dbReference type="GO" id="GO:0051782">
    <property type="term" value="P:negative regulation of cell division"/>
    <property type="evidence" value="ECO:0007669"/>
    <property type="project" value="UniProtKB-UniRule"/>
</dbReference>
<dbReference type="GO" id="GO:0009432">
    <property type="term" value="P:SOS response"/>
    <property type="evidence" value="ECO:0007669"/>
    <property type="project" value="UniProtKB-UniRule"/>
</dbReference>
<dbReference type="FunFam" id="3.40.50.300:FF:000417">
    <property type="entry name" value="Cell division inhibitor SulA"/>
    <property type="match status" value="1"/>
</dbReference>
<dbReference type="Gene3D" id="3.40.50.300">
    <property type="entry name" value="P-loop containing nucleotide triphosphate hydrolases"/>
    <property type="match status" value="1"/>
</dbReference>
<dbReference type="HAMAP" id="MF_01179">
    <property type="entry name" value="SulA"/>
    <property type="match status" value="1"/>
</dbReference>
<dbReference type="InterPro" id="IPR004596">
    <property type="entry name" value="Cell_div_suppressor_SulA"/>
</dbReference>
<dbReference type="InterPro" id="IPR027417">
    <property type="entry name" value="P-loop_NTPase"/>
</dbReference>
<dbReference type="InterPro" id="IPR050356">
    <property type="entry name" value="SulA_CellDiv_inhibitor"/>
</dbReference>
<dbReference type="InterPro" id="IPR047696">
    <property type="entry name" value="SulA_enterobact"/>
</dbReference>
<dbReference type="NCBIfam" id="NF007892">
    <property type="entry name" value="PRK10595.1"/>
    <property type="match status" value="1"/>
</dbReference>
<dbReference type="NCBIfam" id="TIGR00623">
    <property type="entry name" value="SOS_SulA_coli"/>
    <property type="match status" value="1"/>
</dbReference>
<dbReference type="PANTHER" id="PTHR35369">
    <property type="entry name" value="BLR3025 PROTEIN-RELATED"/>
    <property type="match status" value="1"/>
</dbReference>
<dbReference type="PANTHER" id="PTHR35369:SF4">
    <property type="entry name" value="CELL DIVISION INHIBITOR SULA"/>
    <property type="match status" value="1"/>
</dbReference>
<dbReference type="Pfam" id="PF03846">
    <property type="entry name" value="SulA"/>
    <property type="match status" value="1"/>
</dbReference>
<dbReference type="PIRSF" id="PIRSF003093">
    <property type="entry name" value="SulA"/>
    <property type="match status" value="1"/>
</dbReference>
<dbReference type="SUPFAM" id="SSF52540">
    <property type="entry name" value="P-loop containing nucleoside triphosphate hydrolases"/>
    <property type="match status" value="1"/>
</dbReference>
<reference key="1">
    <citation type="journal article" date="2006" name="Proc. Natl. Acad. Sci. U.S.A.">
        <title>Identification of genes subject to positive selection in uropathogenic strains of Escherichia coli: a comparative genomics approach.</title>
        <authorList>
            <person name="Chen S.L."/>
            <person name="Hung C.-S."/>
            <person name="Xu J."/>
            <person name="Reigstad C.S."/>
            <person name="Magrini V."/>
            <person name="Sabo A."/>
            <person name="Blasiar D."/>
            <person name="Bieri T."/>
            <person name="Meyer R.R."/>
            <person name="Ozersky P."/>
            <person name="Armstrong J.R."/>
            <person name="Fulton R.S."/>
            <person name="Latreille J.P."/>
            <person name="Spieth J."/>
            <person name="Hooton T.M."/>
            <person name="Mardis E.R."/>
            <person name="Hultgren S.J."/>
            <person name="Gordon J.I."/>
        </authorList>
    </citation>
    <scope>NUCLEOTIDE SEQUENCE [LARGE SCALE GENOMIC DNA]</scope>
    <source>
        <strain>UTI89 / UPEC</strain>
    </source>
</reference>
<gene>
    <name evidence="1" type="primary">sulA</name>
    <name type="ordered locus">UTI89_C1024</name>
</gene>
<protein>
    <recommendedName>
        <fullName evidence="1">Cell division inhibitor SulA</fullName>
    </recommendedName>
</protein>
<feature type="chain" id="PRO_0000343961" description="Cell division inhibitor SulA">
    <location>
        <begin position="1"/>
        <end position="169"/>
    </location>
</feature>
<feature type="region of interest" description="FtsZ binding" evidence="1">
    <location>
        <begin position="106"/>
        <end position="112"/>
    </location>
</feature>
<feature type="region of interest" description="Lon protease binding" evidence="1">
    <location>
        <begin position="162"/>
        <end position="169"/>
    </location>
</feature>
<feature type="site" description="Essential for degradation by Lon protease" evidence="1">
    <location>
        <position position="169"/>
    </location>
</feature>
<comment type="function">
    <text evidence="1">Component of the SOS system and an inhibitor of cell division. Accumulation of SulA causes rapid cessation of cell division and the appearance of long, non-septate filaments. In the presence of GTP, binds a polymerization-competent form of FtsZ in a 1:1 ratio, thus inhibiting FtsZ polymerization and therefore preventing it from participating in the assembly of the Z ring. This mechanism prevents the premature segregation of damaged DNA to daughter cells during cell division.</text>
</comment>
<comment type="subunit">
    <text evidence="1">Interacts with FtsZ.</text>
</comment>
<comment type="induction">
    <text evidence="1">By DNA damage, as part of the SOS response.</text>
</comment>
<comment type="PTM">
    <text evidence="1">Is rapidly cleaved and degraded by the Lon protease once DNA damage is repaired.</text>
</comment>
<comment type="similarity">
    <text evidence="1">Belongs to the SulA family.</text>
</comment>
<comment type="sequence caution" evidence="2">
    <conflict type="erroneous initiation">
        <sequence resource="EMBL-CDS" id="ABE06509"/>
    </conflict>
</comment>
<sequence length="169" mass="18843">MYTAGYAHRDSSFSSTASKIARVSTENTTAGLISEVVYREDQPMMTQLLLLPLLQQLGQQSRWQLWLTPQQKLSREWVQASGLPLTKVMQISQLSPCHTVESMVRALRTGNYSVVIGWLADDLTEEEHAELVDAANEGNAMGFIMRPVSASSHATRQLSGLKIHSNLYH</sequence>
<accession>Q1RDQ5</accession>
<name>SULA_ECOUT</name>
<organism>
    <name type="scientific">Escherichia coli (strain UTI89 / UPEC)</name>
    <dbReference type="NCBI Taxonomy" id="364106"/>
    <lineage>
        <taxon>Bacteria</taxon>
        <taxon>Pseudomonadati</taxon>
        <taxon>Pseudomonadota</taxon>
        <taxon>Gammaproteobacteria</taxon>
        <taxon>Enterobacterales</taxon>
        <taxon>Enterobacteriaceae</taxon>
        <taxon>Escherichia</taxon>
    </lineage>
</organism>